<feature type="chain" id="PRO_0000189578" description="Motility protein A">
    <location>
        <begin position="1"/>
        <end position="259"/>
    </location>
</feature>
<feature type="transmembrane region" description="Helical" evidence="2">
    <location>
        <begin position="3"/>
        <end position="23"/>
    </location>
</feature>
<feature type="transmembrane region" description="Helical" evidence="2">
    <location>
        <begin position="28"/>
        <end position="48"/>
    </location>
</feature>
<feature type="transmembrane region" description="Helical" evidence="2">
    <location>
        <begin position="148"/>
        <end position="168"/>
    </location>
</feature>
<feature type="transmembrane region" description="Helical" evidence="2">
    <location>
        <begin position="184"/>
        <end position="204"/>
    </location>
</feature>
<feature type="topological domain" description="Cytoplasmic" evidence="2">
    <location>
        <begin position="205"/>
        <end position="259"/>
    </location>
</feature>
<comment type="function">
    <text evidence="1">MotA and MotB comprise the stator element of the flagellar motor complex. Required for rotation of the flagellar motor. Probable transmembrane proton channel (By similarity).</text>
</comment>
<comment type="subunit">
    <text evidence="1">Each stator complex is composed of 4 MotA and 2 MotB subunits. 2 A subunits and 1 B subunit are thought to form a single ion channel, so that each stator complex contains two channels (By similarity).</text>
</comment>
<comment type="subcellular location">
    <subcellularLocation>
        <location evidence="1">Cell inner membrane</location>
        <topology evidence="3">Multi-pass membrane protein</topology>
    </subcellularLocation>
</comment>
<comment type="similarity">
    <text evidence="3">Belongs to the MotA family.</text>
</comment>
<protein>
    <recommendedName>
        <fullName>Motility protein A</fullName>
    </recommendedName>
    <alternativeName>
        <fullName>Chemotaxis protein MotA</fullName>
    </alternativeName>
</protein>
<reference key="1">
    <citation type="journal article" date="1996" name="J. Bacteriol.">
        <title>Organization, transcription, and expression of the 5' region of the fla operon of Treponema phagedenis and Treponema pallidum.</title>
        <authorList>
            <person name="Limberger R.J."/>
            <person name="Slivienski L.L."/>
            <person name="El-Afandi M.C.T."/>
            <person name="Dantuono L.A."/>
        </authorList>
    </citation>
    <scope>NUCLEOTIDE SEQUENCE [GENOMIC DNA]</scope>
</reference>
<reference key="2">
    <citation type="journal article" date="1998" name="Science">
        <title>Complete genome sequence of Treponema pallidum, the syphilis spirochete.</title>
        <authorList>
            <person name="Fraser C.M."/>
            <person name="Norris S.J."/>
            <person name="Weinstock G.M."/>
            <person name="White O."/>
            <person name="Sutton G.G."/>
            <person name="Dodson R.J."/>
            <person name="Gwinn M.L."/>
            <person name="Hickey E.K."/>
            <person name="Clayton R.A."/>
            <person name="Ketchum K.A."/>
            <person name="Sodergren E."/>
            <person name="Hardham J.M."/>
            <person name="McLeod M.P."/>
            <person name="Salzberg S.L."/>
            <person name="Peterson J.D."/>
            <person name="Khalak H.G."/>
            <person name="Richardson D.L."/>
            <person name="Howell J.K."/>
            <person name="Chidambaram M."/>
            <person name="Utterback T.R."/>
            <person name="McDonald L.A."/>
            <person name="Artiach P."/>
            <person name="Bowman C."/>
            <person name="Cotton M.D."/>
            <person name="Fujii C."/>
            <person name="Garland S.A."/>
            <person name="Hatch B."/>
            <person name="Horst K."/>
            <person name="Roberts K.M."/>
            <person name="Sandusky M."/>
            <person name="Weidman J.F."/>
            <person name="Smith H.O."/>
            <person name="Venter J.C."/>
        </authorList>
    </citation>
    <scope>NUCLEOTIDE SEQUENCE [LARGE SCALE GENOMIC DNA]</scope>
    <source>
        <strain>Nichols</strain>
    </source>
</reference>
<proteinExistence type="inferred from homology"/>
<dbReference type="EMBL" id="U28219">
    <property type="protein sequence ID" value="AAB61253.1"/>
    <property type="molecule type" value="Genomic_DNA"/>
</dbReference>
<dbReference type="EMBL" id="AE000520">
    <property type="protein sequence ID" value="AAC65690.1"/>
    <property type="molecule type" value="Genomic_DNA"/>
</dbReference>
<dbReference type="PIR" id="A71292">
    <property type="entry name" value="A71292"/>
</dbReference>
<dbReference type="RefSeq" id="WP_010882170.1">
    <property type="nucleotide sequence ID" value="NC_021490.2"/>
</dbReference>
<dbReference type="SMR" id="O07886"/>
<dbReference type="IntAct" id="O07886">
    <property type="interactions" value="2"/>
</dbReference>
<dbReference type="STRING" id="243276.TP_0725"/>
<dbReference type="EnsemblBacteria" id="AAC65690">
    <property type="protein sequence ID" value="AAC65690"/>
    <property type="gene ID" value="TP_0725"/>
</dbReference>
<dbReference type="KEGG" id="tpa:TP_0725"/>
<dbReference type="KEGG" id="tpw:TPANIC_0725"/>
<dbReference type="eggNOG" id="COG1291">
    <property type="taxonomic scope" value="Bacteria"/>
</dbReference>
<dbReference type="HOGENOM" id="CLU_079895_1_0_12"/>
<dbReference type="OrthoDB" id="9806929at2"/>
<dbReference type="Proteomes" id="UP000000811">
    <property type="component" value="Chromosome"/>
</dbReference>
<dbReference type="GO" id="GO:0005886">
    <property type="term" value="C:plasma membrane"/>
    <property type="evidence" value="ECO:0007669"/>
    <property type="project" value="UniProtKB-SubCell"/>
</dbReference>
<dbReference type="GO" id="GO:0071978">
    <property type="term" value="P:bacterial-type flagellum-dependent swarming motility"/>
    <property type="evidence" value="ECO:0007669"/>
    <property type="project" value="InterPro"/>
</dbReference>
<dbReference type="GO" id="GO:0006935">
    <property type="term" value="P:chemotaxis"/>
    <property type="evidence" value="ECO:0007669"/>
    <property type="project" value="UniProtKB-KW"/>
</dbReference>
<dbReference type="GO" id="GO:1902600">
    <property type="term" value="P:proton transmembrane transport"/>
    <property type="evidence" value="ECO:0007669"/>
    <property type="project" value="UniProtKB-KW"/>
</dbReference>
<dbReference type="InterPro" id="IPR000540">
    <property type="entry name" value="Flag_MotA_CS"/>
</dbReference>
<dbReference type="InterPro" id="IPR047055">
    <property type="entry name" value="MotA-like"/>
</dbReference>
<dbReference type="InterPro" id="IPR002898">
    <property type="entry name" value="MotA_ExbB_proton_chnl"/>
</dbReference>
<dbReference type="PANTHER" id="PTHR30433">
    <property type="entry name" value="CHEMOTAXIS PROTEIN MOTA"/>
    <property type="match status" value="1"/>
</dbReference>
<dbReference type="PANTHER" id="PTHR30433:SF2">
    <property type="entry name" value="MOTILITY PROTEIN A"/>
    <property type="match status" value="1"/>
</dbReference>
<dbReference type="Pfam" id="PF01618">
    <property type="entry name" value="MotA_ExbB"/>
    <property type="match status" value="1"/>
</dbReference>
<dbReference type="PROSITE" id="PS01307">
    <property type="entry name" value="MOTA"/>
    <property type="match status" value="1"/>
</dbReference>
<organism>
    <name type="scientific">Treponema pallidum (strain Nichols)</name>
    <dbReference type="NCBI Taxonomy" id="243276"/>
    <lineage>
        <taxon>Bacteria</taxon>
        <taxon>Pseudomonadati</taxon>
        <taxon>Spirochaetota</taxon>
        <taxon>Spirochaetia</taxon>
        <taxon>Spirochaetales</taxon>
        <taxon>Treponemataceae</taxon>
        <taxon>Treponema</taxon>
    </lineage>
</organism>
<gene>
    <name type="primary">motA</name>
    <name type="ordered locus">TP_0725</name>
</gene>
<evidence type="ECO:0000250" key="1"/>
<evidence type="ECO:0000255" key="2"/>
<evidence type="ECO:0000305" key="3"/>
<sequence length="259" mass="28645">MDIASFIGLFGGFAIIIFGAVLGGSARGLFHVPSLLITVGGSYLTLFLTYPLSYAVGVFRVIARVFHAADFHEREIVQRLYALAEKSRRTGLLALEEEIQDFDDDFVRTGLRNVVDGVDGDAIKALMESELTHMEDRHNTWISLLNSWAALAPGYGMLGTVMGLIGMLATLEDKSSLGSNMATALITTFYGSLVQNWFITPVATKLQYQHDLEVKSKEMVIEGVLSIQAGDHPRVLAQRLLTYLSPKMRKELEMELIKD</sequence>
<accession>O07886</accession>
<keyword id="KW-0997">Cell inner membrane</keyword>
<keyword id="KW-1003">Cell membrane</keyword>
<keyword id="KW-0145">Chemotaxis</keyword>
<keyword id="KW-0283">Flagellar rotation</keyword>
<keyword id="KW-0375">Hydrogen ion transport</keyword>
<keyword id="KW-0406">Ion transport</keyword>
<keyword id="KW-0472">Membrane</keyword>
<keyword id="KW-1185">Reference proteome</keyword>
<keyword id="KW-0812">Transmembrane</keyword>
<keyword id="KW-1133">Transmembrane helix</keyword>
<keyword id="KW-0813">Transport</keyword>
<name>MOTA_TREPA</name>